<gene>
    <name type="ORF">1a</name>
</gene>
<evidence type="ECO:0000250" key="1"/>
<evidence type="ECO:0000250" key="2">
    <source>
        <dbReference type="UniProtKB" id="P0DTC1"/>
    </source>
</evidence>
<evidence type="ECO:0000255" key="3"/>
<evidence type="ECO:0000255" key="4">
    <source>
        <dbReference type="PROSITE-ProRule" id="PRU00214"/>
    </source>
</evidence>
<evidence type="ECO:0000255" key="5">
    <source>
        <dbReference type="PROSITE-ProRule" id="PRU00444"/>
    </source>
</evidence>
<evidence type="ECO:0000255" key="6">
    <source>
        <dbReference type="PROSITE-ProRule" id="PRU00490"/>
    </source>
</evidence>
<evidence type="ECO:0000255" key="7">
    <source>
        <dbReference type="PROSITE-ProRule" id="PRU00772"/>
    </source>
</evidence>
<evidence type="ECO:0000255" key="8">
    <source>
        <dbReference type="PROSITE-ProRule" id="PRU01289"/>
    </source>
</evidence>
<evidence type="ECO:0000255" key="9">
    <source>
        <dbReference type="PROSITE-ProRule" id="PRU01290"/>
    </source>
</evidence>
<evidence type="ECO:0000255" key="10">
    <source>
        <dbReference type="PROSITE-ProRule" id="PRU01291"/>
    </source>
</evidence>
<evidence type="ECO:0000255" key="11">
    <source>
        <dbReference type="PROSITE-ProRule" id="PRU01294"/>
    </source>
</evidence>
<evidence type="ECO:0000255" key="12">
    <source>
        <dbReference type="PROSITE-ProRule" id="PRU01295"/>
    </source>
</evidence>
<evidence type="ECO:0000255" key="13">
    <source>
        <dbReference type="PROSITE-ProRule" id="PRU01296"/>
    </source>
</evidence>
<evidence type="ECO:0000255" key="14">
    <source>
        <dbReference type="PROSITE-ProRule" id="PRU01297"/>
    </source>
</evidence>
<evidence type="ECO:0000255" key="15">
    <source>
        <dbReference type="PROSITE-ProRule" id="PRU01307"/>
    </source>
</evidence>
<evidence type="ECO:0000255" key="16">
    <source>
        <dbReference type="PROSITE-ProRule" id="PRU01308"/>
    </source>
</evidence>
<evidence type="ECO:0000255" key="17">
    <source>
        <dbReference type="PROSITE-ProRule" id="PRU01333"/>
    </source>
</evidence>
<evidence type="ECO:0000255" key="18">
    <source>
        <dbReference type="PROSITE-ProRule" id="PRU01334"/>
    </source>
</evidence>
<evidence type="ECO:0000255" key="19">
    <source>
        <dbReference type="PROSITE-ProRule" id="PRU01335"/>
    </source>
</evidence>
<evidence type="ECO:0000255" key="20">
    <source>
        <dbReference type="PROSITE-ProRule" id="PRU01336"/>
    </source>
</evidence>
<evidence type="ECO:0000255" key="21">
    <source>
        <dbReference type="PROSITE-ProRule" id="PRU01337"/>
    </source>
</evidence>
<evidence type="ECO:0000255" key="22">
    <source>
        <dbReference type="PROSITE-ProRule" id="PRU01338"/>
    </source>
</evidence>
<evidence type="ECO:0000256" key="23">
    <source>
        <dbReference type="SAM" id="MobiDB-lite"/>
    </source>
</evidence>
<evidence type="ECO:0000305" key="24"/>
<sequence length="4416" mass="491187">MAKMGKYGLGFKWAPEFPWMLPNASEKLGSPERSEEDGFCPSAAQEPKTKGKTLINHVRVDCSRLPALECCVQSAIIRDIFVDEDPLNVEASTMMALQFGSAVLVKPSKRLSIQAWAKLGVLPKTPAMGLFKRFCLCNTRECVCDAHVAFQLFTVQPDGVCLGNGRFIGWFVPVTAIPAYAKQWLQPWSILLRKGGNKGSVTSGHFRRAVTMPVYDFNVEDACEEVHLNPKGKYSRKAYALLKGYRGVKSILFLDQYGCDYTGRLAKGLEDYGDCTLEEMKELFPVWCDSLDNEVVVAWHVDRDPRAVMRLQTLATIRSIGYVGQPTEDLVDGDVVVREPAHLLAANAIVKRLPRLVETMLYTDSSVTEFCYKTKLCDCGFITQFGYVDCCGDACDFRGWVPGNMMDGFLCPGCSKSYMPWELEAQSSGVIPKGGVLFTQSTDTVNRESFKLYGHAVVPFGSAVYWSPYPGMWLPVIWSSVKSYADLTYTGVVGCKAIVQETDAICRSLYMDYVQHKCGNLEQRAILGLDDVYHRQLLVNRGDYSLLLENVDLFVKRRAEFACKFATCGDGLVPLLLDGLVPRSYYLIKSGQAFTSMMVNFSHEVTDMCMDMALLFMHDVKVATKYVKKVTGKLAVRFKALGVAVVRKITEWFDLAVDTAASAAGWLCYQLVNGLFAVANGGITFLSDVPELVKNFVDKFKVFFKVLIDSMSVSVLSGLTVVKTASNRVCLAGCKVYEVVQKRLSAYVMPVGCNEATCLVGEIEPAVVEDDVVDVVKAPLTYQGCCKPPTSFEKICVVDKLYMAKCGDQFYPVVVDNDTIGVLDQCWRFPCAGKKVEFNDKPKVKEIPSTRKIKINFALDATFDSVLSKACSEFEVDKDVTLDELLDVVLDAVESTLSPCKEHDVIGTKVCALLNRLAEDYVYLFDEGGEEVIAPKMYCSFSAPDDEDCVAADVVDADENQGDDADDSAALVTDTQEEDGVAKGQVGVAESDARLDQVEAFDIEKVEDPILNELSAELNAPADKTYEDVLAFDAIYSEALSAFYAVPGDETHFKVCGFYSPAIERTNCWLRSTLIVMQSLPLEFKDLEMQKLWLSYKSSYNKEFVDKLVKSVPKSIILPQGGYVADFAYFFLSQCSFKAYANWRCLKCDMDLKLQGLDAMFFYGDVVSHVCKCGTGMTLLSADIPYTLHFGLRDDKFCAFYTPRKVFRAACVVDVNDCHSMAVVDGKQIDGKVVTKFNGDKYDFMVGHGMAFSMSAFEIAQLYGSCITPNVCFVKGDVIKVLRRVGAEVIVNPANGRMAHGAGVAGAIAKAAGKSFIKETADMVKNQGVCQVGECYESTGGNLCKTVLNIVGPDARGHGKQCYSFLERAYQHINKCDDVVTTLISAGIFSVPTDVSLTYLIGVVTKNVILVSNNKDDFDVIEKCQVTSIAGTKALSLQLAKNLCRDVKFETNACDSLFSDSCFVSSYDVLQEVELLRHDIQLDDDARVFVQAHMDNLPADWRLVNKFDSVDGVRTVKYFECPGEIFVSSQGKKFGYVQNGSFKVASVSQIRALLANKVDVLCTVDGVNFRSCCVAEGEVFGKTLGSVFCDGINVTKVRCSAIHKGKVFFQYSGLSAADLVAVTDAFGFDEPQLLKYYNMLGMCKWPVVVCGNYFAFKQSNNNCYINVACLMLQHLSLKFHKWQWQEAWNEFRSGKPLRFVSLVLAKGSFKFNEPSDSTDFMRVVLREADLSGATCDFEFVCKCGVKQEQRKGVDAVMHFGTLDKGDLAKGYTIACTCGNKLVHCTQLNVPFLICSNKPEGKKLPDDVVAANIFTGGSLGHYTHVKCKPKYQLYDACNVSKVSEAKGNFTDCLYLKNLKQTFSSKLTTFYLDDVKCVEYNPDLSQYYCESGKYYTKPIIKAQFRTFEKVEGVYTNFKLVGHSIAEKFNAKLGFDCNSPFTEYKITEWPTATGDVVLASDDLYVSRYSGGCVTFGKPVIWLGHEEASLKSLTYFNRPSVVCENKFNVLPVDVSEPTDKGPVPAAVLVTGALSGAATAPGTAKEQKVCASDSVVDQVVSGFLSDLSGATVDVKEVKLNGVKKPIKVEDSVVVNDPTSETKVVKSLSIVDVYDMFLTGCRYVVWMANELSRLVNSPTVREYVKWGMTKIVIPAKLVLLRDEKQEFVAPKVVKAKVIACYSAVKWFFLYCFSWIKFNTDNKVIYTTEVASKLTFNLCCLAFKNALQTFNWNVVSRGFFLVATVFLLWFNFLYANVILSDFYLPNIGFFPTFVGQIVAWVKTTFGIFTLCDLYQVSDVGYRSSFCNGSMVCELCFSGFDMLDNYDAINVVQHVVDRRVSFDYISLFKLVVELVIGYSLYTVCFYPLFGLIGMQLLTTWLPEFFMLETMHWSARFFVFVANMLPAFTLLRFYIVVTAMYKIFCLCRHVMYGCSRPGCLFCYKRNRSVRVKCSTVVGGTLRYYDVMANGGTGFCAKHQWNCLNCSAFGPGNTFITHEAAADLSKELKRPVNPTDSAYYLVTEVKQVGCSMRLFYERDGQRVYDDVSASLFVDMNGLLHSKVKGVPETHVVVVENEADKAGFLNAAVFYAQSLYRPMLLVEKKLITTANTGLSVSQTMFDLYVDSLLGVLDVDRKSLTSFVNAAHNSLKEGVQLEQVMDTFIGCARRKCAIDSDVETKSITKSIMSAVNAGVDFTDESCNNLVPTYVKSDTIVAADLGVLIQNNAKHVQANVAKAANVACIWSVDAFNQLSADLQHRLRKACSKTGLKIKLTYNKQEANVPILTTPFSLKGGAVFSKVLQWLFVVNLICFIVLWALMPTYAVHKSDMQLPLYASFKVIDNGVLRDVTVTDACFANKFIQFDQWYESTFGLVYYRNSRACPVVVAVIDQDIGYTLFNVPTKVLRYGFHVLHFITHAFATDSVQCYTPHMQIPYDNFYASGCVLSSLCTMLAHADGTPHPYCYTEGIMHNASLYDSLAPHVRYNLANSNGYIRFPEVVSEGIVRIVRTRSMTYCRVGLCEDAEEGVCFNFNSSWVLNNPYYRAMPGTFCGRNAFDLIHQVLGGLVRPIDFFALTASSVAGAILAIIVVLAFYYLIKLKRAFGDYTSVVVINVIVWCINFLMLFVFQVYPTLSCLYACFYFYTTLYFPSEISVVMHLQWLVMYGAIMPLWFCIIYVAVVVSNHALWLFSYCRKLGTEVRSDGTFEEMSLTTFMITKESYCKLKNSVSDVAFNRYLSLYNKYRYFSGKMDTAAYREAACSQLAKAMETFNHNNGNDVLYQPPTASVTTSFLQSGIVKMVFPTSKVEPCVVSVTYGNMTLNGLWLDDKVYCPRHVICSSADMTDPDYSNLLCRVISSDFCVMSGRMSLTVMSYQMQGSLLVLTVTLQNPNTPKYSFGVVKPGETFTVLAAYNGKSQGAFHVTMRSSYTIKGSFLCGSCGSVGYVLTGDSVRFVYMHQLELSTGCHTGTDFSGNFYGPYRDAQVVQLPVQDYTQTVNVVAWLYAAILNRCNWFVQSDSCSLEEFNVWAMTNGFSSIKADLVLDALASMTGVTVEQILAAIKRLYSGFQGKQILGSCVLEDELTPSDVYQQLAGVKLQSKRTRVVKGTCCWILASTLLFCSIISAFVKWTMFMYVTTHMLGVTLCALCFVSFAMLLVKHKHLYLTMFIMPVLCTLFYTNYLVVYKQSFRGLAYAWLSHFVPAVDYTYMDEVLYGVVLLVAMVFVTMRSINHDVFSVMFLVGRLVSLVSMWYFGANLEEEVLLFLTSLFGTYTWTTMLSLATAKVIAKWLAVNVLYFTDVPQVKLVLLSYLCIGYVCCCYWGVLSLLNSIFRMPLGVYNYKISVQELRYMNANGLRPPRNSFEALVLNFKLLGIGGVPVIEVSQIQSRLTDVKCVNVVLLNCLQHLHIASSSKLWQYCSTLHNEILATSDLSVAFDKLAQLLVVLFANPAAVDSKCLASIEEVSDDYVRDSTVLQALQSEFVNMASFVEYELAKKNLDEAKASGSANQQQIKQLEKACNIAKSAYERDRAVARKLERMADLALTNMYKEARINDKKSKVVSALQTMLFSMIRKLDNQALNSILDNAVKGCVPLNAIPSLTSNTLTIIVPDKQVFDQVVDNVYVTYAGNVWHIQSIQDADGAVKQLNEIDVNITWPLVIAANRHNEVSSVVLQNNELMPQKLRTQVVNSGSDMNCNTPTQCYYNTTGMGKIVYAILSDCDGLKYTKIVKEDGNCVVLELDPPCKFSVQDVKGLKIKYLYFVKGCNTLARGWVVGTLSSTVRLQAGTATEYASNSAIRSLCAFSVDPKKTYLDYIQQGGAPVTNCVKMLCDHAGTGMAITIKPEATTNQDSYGGASVCIYCRSRVEHPDVDGLCKLRGKFVQVPLGIKDPVSYVLTHDVCQVCGFWRDGSCSCVGTGSQFQSKDTNFLNGFGVQV</sequence>
<organism>
    <name type="scientific">Murine coronavirus (strain 2)</name>
    <name type="common">MHV-2</name>
    <name type="synonym">Murine hepatitis virus</name>
    <dbReference type="NCBI Taxonomy" id="76344"/>
    <lineage>
        <taxon>Viruses</taxon>
        <taxon>Riboviria</taxon>
        <taxon>Orthornavirae</taxon>
        <taxon>Pisuviricota</taxon>
        <taxon>Pisoniviricetes</taxon>
        <taxon>Nidovirales</taxon>
        <taxon>Cornidovirineae</taxon>
        <taxon>Coronaviridae</taxon>
        <taxon>Orthocoronavirinae</taxon>
        <taxon>Betacoronavirus</taxon>
        <taxon>Embecovirus</taxon>
        <taxon>Murine coronavirus</taxon>
    </lineage>
</organism>
<name>R1A_CVM2</name>
<feature type="chain" id="PRO_0000338266" description="Replicase polyprotein 1a">
    <location>
        <begin position="1"/>
        <end position="4416"/>
    </location>
</feature>
<feature type="chain" id="PRO_0000338267" description="Non-structural protein 1" evidence="1">
    <location>
        <begin position="1"/>
        <end position="247"/>
    </location>
</feature>
<feature type="chain" id="PRO_0000338268" description="Non-structural protein 2" evidence="1">
    <location>
        <begin position="248"/>
        <end position="832"/>
    </location>
</feature>
<feature type="chain" id="PRO_0000338269" description="Papain-like protease nsp3" evidence="1">
    <location>
        <begin position="833"/>
        <end position="2783"/>
    </location>
</feature>
<feature type="chain" id="PRO_0000338270" description="Non-structural protein 4" evidence="1">
    <location>
        <begin position="2784"/>
        <end position="3279"/>
    </location>
</feature>
<feature type="chain" id="PRO_0000338271" description="3C-like proteinase nsp5" evidence="1">
    <location>
        <begin position="3280"/>
        <end position="3582"/>
    </location>
</feature>
<feature type="chain" id="PRO_0000338272" description="Non-structural protein 6" evidence="1">
    <location>
        <begin position="3583"/>
        <end position="3869"/>
    </location>
</feature>
<feature type="chain" id="PRO_0000338273" description="Non-structural protein 7" evidence="1">
    <location>
        <begin position="3870"/>
        <end position="3961"/>
    </location>
</feature>
<feature type="chain" id="PRO_0000338274" description="Non-structural protein 8" evidence="1">
    <location>
        <begin position="3962"/>
        <end position="4155"/>
    </location>
</feature>
<feature type="chain" id="PRO_0000338275" description="RNA-capping enzyme subunit nsp9" evidence="1">
    <location>
        <begin position="4156"/>
        <end position="4265"/>
    </location>
</feature>
<feature type="chain" id="PRO_0000338276" description="Non-structural protein 10" evidence="1">
    <location>
        <begin position="4266"/>
        <end position="4402"/>
    </location>
</feature>
<feature type="chain" id="PRO_0000338277" description="Non-structural protein 11" evidence="3">
    <location>
        <begin position="4403"/>
        <end position="4416"/>
    </location>
</feature>
<feature type="transmembrane region" description="Helical" evidence="3">
    <location>
        <begin position="2232"/>
        <end position="2252"/>
    </location>
</feature>
<feature type="transmembrane region" description="Helical" evidence="3">
    <location>
        <begin position="2260"/>
        <end position="2280"/>
    </location>
</feature>
<feature type="transmembrane region" description="Helical" evidence="3">
    <location>
        <begin position="2346"/>
        <end position="2366"/>
    </location>
</feature>
<feature type="transmembrane region" description="Helical" evidence="3">
    <location>
        <begin position="2388"/>
        <end position="2408"/>
    </location>
</feature>
<feature type="transmembrane region" description="Helical" evidence="3">
    <location>
        <begin position="2789"/>
        <end position="2809"/>
    </location>
</feature>
<feature type="transmembrane region" description="Helical" evidence="3">
    <location>
        <begin position="2869"/>
        <end position="2889"/>
    </location>
</feature>
<feature type="transmembrane region" description="Helical" evidence="3">
    <location>
        <begin position="3042"/>
        <end position="3062"/>
    </location>
</feature>
<feature type="transmembrane region" description="Helical" evidence="3">
    <location>
        <begin position="3064"/>
        <end position="3084"/>
    </location>
</feature>
<feature type="transmembrane region" description="Helical" evidence="3">
    <location>
        <begin position="3096"/>
        <end position="3116"/>
    </location>
</feature>
<feature type="transmembrane region" description="Helical" evidence="3">
    <location>
        <begin position="3123"/>
        <end position="3143"/>
    </location>
</feature>
<feature type="transmembrane region" description="Helical" evidence="3">
    <location>
        <begin position="3148"/>
        <end position="3168"/>
    </location>
</feature>
<feature type="transmembrane region" description="Helical" evidence="3">
    <location>
        <begin position="3591"/>
        <end position="3611"/>
    </location>
</feature>
<feature type="transmembrane region" description="Helical" evidence="3">
    <location>
        <begin position="3621"/>
        <end position="3641"/>
    </location>
</feature>
<feature type="transmembrane region" description="Helical" evidence="3">
    <location>
        <begin position="3647"/>
        <end position="3667"/>
    </location>
</feature>
<feature type="transmembrane region" description="Helical" evidence="3">
    <location>
        <begin position="3690"/>
        <end position="3710"/>
    </location>
</feature>
<feature type="transmembrane region" description="Helical" evidence="3">
    <location>
        <begin position="3717"/>
        <end position="3737"/>
    </location>
</feature>
<feature type="transmembrane region" description="Helical" evidence="3">
    <location>
        <begin position="3744"/>
        <end position="3764"/>
    </location>
</feature>
<feature type="transmembrane region" description="Helical" evidence="3">
    <location>
        <begin position="3788"/>
        <end position="3808"/>
    </location>
</feature>
<feature type="domain" description="CoV Nsp1 globular" evidence="15">
    <location>
        <begin position="54"/>
        <end position="196"/>
    </location>
</feature>
<feature type="domain" description="BetaCoV Nsp1 C-terminal" evidence="16">
    <location>
        <begin position="217"/>
        <end position="247"/>
    </location>
</feature>
<feature type="domain" description="CoV Nsp2 N-terminal" evidence="17">
    <location>
        <begin position="251"/>
        <end position="511"/>
    </location>
</feature>
<feature type="domain" description="CoV Nsp2 middle" evidence="18">
    <location>
        <begin position="518"/>
        <end position="706"/>
    </location>
</feature>
<feature type="domain" description="CoV Nsp2 C-terminal" evidence="19">
    <location>
        <begin position="726"/>
        <end position="832"/>
    </location>
</feature>
<feature type="domain" description="Ubiquitin-like 1" evidence="4">
    <location>
        <begin position="834"/>
        <end position="946"/>
    </location>
</feature>
<feature type="domain" description="Peptidase C16 1" evidence="5">
    <location>
        <begin position="1031"/>
        <end position="1268"/>
    </location>
</feature>
<feature type="domain" description="Macro" evidence="6">
    <location>
        <begin position="1269"/>
        <end position="1429"/>
    </location>
</feature>
<feature type="domain" description="DPUP" evidence="8">
    <location>
        <begin position="1484"/>
        <end position="1556"/>
    </location>
</feature>
<feature type="domain" description="Ubiquitin-like 2" evidence="4">
    <location>
        <begin position="1555"/>
        <end position="1610"/>
    </location>
</feature>
<feature type="domain" description="Peptidase C16 2" evidence="5">
    <location>
        <begin position="1625"/>
        <end position="1884"/>
    </location>
</feature>
<feature type="domain" description="Nucleic acid-binding" evidence="9">
    <location>
        <begin position="1898"/>
        <end position="1999"/>
    </location>
</feature>
<feature type="domain" description="G2M" evidence="22">
    <location>
        <begin position="2053"/>
        <end position="2202"/>
    </location>
</feature>
<feature type="domain" description="3Ecto" evidence="21">
    <location>
        <begin position="2268"/>
        <end position="2329"/>
    </location>
</feature>
<feature type="domain" description="CoV Nsp3 Y" evidence="20">
    <location>
        <begin position="2416"/>
        <end position="2783"/>
    </location>
</feature>
<feature type="domain" description="Nsp4C" evidence="10">
    <location>
        <begin position="3182"/>
        <end position="3279"/>
    </location>
</feature>
<feature type="domain" description="Peptidase C30" evidence="7">
    <location>
        <begin position="3280"/>
        <end position="3582"/>
    </location>
</feature>
<feature type="domain" description="RdRp Nsp7 cofactor" evidence="11">
    <location>
        <begin position="3870"/>
        <end position="3958"/>
    </location>
</feature>
<feature type="domain" description="RdRp Nsp8 cofactor" evidence="12">
    <location>
        <begin position="3959"/>
        <end position="4155"/>
    </location>
</feature>
<feature type="domain" description="Nsp9 ssRNA-binding" evidence="13">
    <location>
        <begin position="4156"/>
        <end position="4265"/>
    </location>
</feature>
<feature type="domain" description="ExoN/MTase coactivator" evidence="14">
    <location>
        <begin position="4266"/>
        <end position="4403"/>
    </location>
</feature>
<feature type="zinc finger region" description="C4-type 1" evidence="5">
    <location>
        <begin position="1145"/>
        <end position="1173"/>
    </location>
</feature>
<feature type="zinc finger region" description="C4-type 2" evidence="5">
    <location>
        <begin position="1741"/>
        <end position="1777"/>
    </location>
</feature>
<feature type="zinc finger region" evidence="1">
    <location>
        <begin position="4339"/>
        <end position="4355"/>
    </location>
</feature>
<feature type="zinc finger region" evidence="1">
    <location>
        <begin position="4381"/>
        <end position="4394"/>
    </location>
</feature>
<feature type="region of interest" description="Disordered" evidence="23">
    <location>
        <begin position="25"/>
        <end position="45"/>
    </location>
</feature>
<feature type="region of interest" description="C4" evidence="17">
    <location>
        <begin position="390"/>
        <end position="414"/>
    </location>
</feature>
<feature type="region of interest" description="HD1">
    <location>
        <begin position="2232"/>
        <end position="2408"/>
    </location>
</feature>
<feature type="region of interest" description="Y1" evidence="20">
    <location>
        <begin position="2416"/>
        <end position="2506"/>
    </location>
</feature>
<feature type="region of interest" description="ZF1" evidence="20">
    <location>
        <begin position="2420"/>
        <end position="2433"/>
    </location>
</feature>
<feature type="region of interest" description="ZF2" evidence="20">
    <location>
        <begin position="2466"/>
        <end position="2476"/>
    </location>
</feature>
<feature type="region of interest" description="CoV-Y" evidence="20">
    <location>
        <begin position="2507"/>
        <end position="2783"/>
    </location>
</feature>
<feature type="region of interest" description="Y2" evidence="20">
    <location>
        <begin position="2507"/>
        <end position="2599"/>
    </location>
</feature>
<feature type="region of interest" description="Y3" evidence="20">
    <location>
        <begin position="2600"/>
        <end position="2682"/>
    </location>
</feature>
<feature type="region of interest" description="Y4" evidence="20">
    <location>
        <begin position="2683"/>
        <end position="2783"/>
    </location>
</feature>
<feature type="region of interest" description="HD2">
    <location>
        <begin position="2789"/>
        <end position="3168"/>
    </location>
</feature>
<feature type="region of interest" description="HD3">
    <location>
        <begin position="3525"/>
        <end position="3808"/>
    </location>
</feature>
<feature type="active site" description="For PL1-PRO activity" evidence="5">
    <location>
        <position position="1068"/>
    </location>
</feature>
<feature type="active site" description="For PL1-PRO activity" evidence="5">
    <location>
        <position position="1219"/>
    </location>
</feature>
<feature type="active site" description="For PL1-PRO activity" evidence="5">
    <location>
        <position position="1230"/>
    </location>
</feature>
<feature type="active site" description="For PL2-PRO activity" evidence="5">
    <location>
        <position position="1663"/>
    </location>
</feature>
<feature type="active site" description="For PL2-PRO activity" evidence="5">
    <location>
        <position position="1820"/>
    </location>
</feature>
<feature type="active site" description="For PL2-PRO activity" evidence="5">
    <location>
        <position position="1834"/>
    </location>
</feature>
<feature type="active site" description="For 3CL-PRO activity" evidence="7">
    <location>
        <position position="3320"/>
    </location>
</feature>
<feature type="active site" description="For 3CL-PRO activity" evidence="7">
    <location>
        <position position="3424"/>
    </location>
</feature>
<feature type="binding site" evidence="17">
    <location>
        <position position="390"/>
    </location>
    <ligand>
        <name>Zn(2+)</name>
        <dbReference type="ChEBI" id="CHEBI:29105"/>
        <label>1</label>
    </ligand>
</feature>
<feature type="binding site" evidence="17">
    <location>
        <position position="395"/>
    </location>
    <ligand>
        <name>Zn(2+)</name>
        <dbReference type="ChEBI" id="CHEBI:29105"/>
        <label>1</label>
    </ligand>
</feature>
<feature type="binding site" evidence="17">
    <location>
        <position position="411"/>
    </location>
    <ligand>
        <name>Zn(2+)</name>
        <dbReference type="ChEBI" id="CHEBI:29105"/>
        <label>1</label>
    </ligand>
</feature>
<feature type="binding site" evidence="17">
    <location>
        <position position="414"/>
    </location>
    <ligand>
        <name>Zn(2+)</name>
        <dbReference type="ChEBI" id="CHEBI:29105"/>
        <label>1</label>
    </ligand>
</feature>
<feature type="binding site" evidence="5">
    <location>
        <position position="1145"/>
    </location>
    <ligand>
        <name>Zn(2+)</name>
        <dbReference type="ChEBI" id="CHEBI:29105"/>
        <label>2</label>
    </ligand>
</feature>
<feature type="binding site" evidence="5">
    <location>
        <position position="1148"/>
    </location>
    <ligand>
        <name>Zn(2+)</name>
        <dbReference type="ChEBI" id="CHEBI:29105"/>
        <label>2</label>
    </ligand>
</feature>
<feature type="binding site" evidence="5">
    <location>
        <position position="1171"/>
    </location>
    <ligand>
        <name>Zn(2+)</name>
        <dbReference type="ChEBI" id="CHEBI:29105"/>
        <label>2</label>
    </ligand>
</feature>
<feature type="binding site" evidence="5">
    <location>
        <position position="1173"/>
    </location>
    <ligand>
        <name>Zn(2+)</name>
        <dbReference type="ChEBI" id="CHEBI:29105"/>
        <label>2</label>
    </ligand>
</feature>
<feature type="binding site" evidence="5">
    <location>
        <position position="1741"/>
    </location>
    <ligand>
        <name>Zn(2+)</name>
        <dbReference type="ChEBI" id="CHEBI:29105"/>
        <label>3</label>
    </ligand>
</feature>
<feature type="binding site" evidence="5">
    <location>
        <position position="1743"/>
    </location>
    <ligand>
        <name>Zn(2+)</name>
        <dbReference type="ChEBI" id="CHEBI:29105"/>
        <label>3</label>
    </ligand>
</feature>
<feature type="binding site" evidence="5">
    <location>
        <position position="1775"/>
    </location>
    <ligand>
        <name>Zn(2+)</name>
        <dbReference type="ChEBI" id="CHEBI:29105"/>
        <label>3</label>
    </ligand>
</feature>
<feature type="binding site" evidence="5">
    <location>
        <position position="1777"/>
    </location>
    <ligand>
        <name>Zn(2+)</name>
        <dbReference type="ChEBI" id="CHEBI:29105"/>
        <label>3</label>
    </ligand>
</feature>
<feature type="binding site" evidence="20">
    <location>
        <position position="2420"/>
    </location>
    <ligand>
        <name>Zn(2+)</name>
        <dbReference type="ChEBI" id="CHEBI:29105"/>
        <label>4</label>
    </ligand>
</feature>
<feature type="binding site" evidence="20">
    <location>
        <position position="2425"/>
    </location>
    <ligand>
        <name>Zn(2+)</name>
        <dbReference type="ChEBI" id="CHEBI:29105"/>
        <label>4</label>
    </ligand>
</feature>
<feature type="binding site" evidence="20">
    <location>
        <position position="2430"/>
    </location>
    <ligand>
        <name>Zn(2+)</name>
        <dbReference type="ChEBI" id="CHEBI:29105"/>
        <label>4</label>
    </ligand>
</feature>
<feature type="binding site" evidence="20">
    <location>
        <position position="2433"/>
    </location>
    <ligand>
        <name>Zn(2+)</name>
        <dbReference type="ChEBI" id="CHEBI:29105"/>
        <label>4</label>
    </ligand>
</feature>
<feature type="binding site" evidence="20">
    <location>
        <position position="2466"/>
    </location>
    <ligand>
        <name>Zn(2+)</name>
        <dbReference type="ChEBI" id="CHEBI:29105"/>
        <label>5</label>
    </ligand>
</feature>
<feature type="binding site" evidence="20">
    <location>
        <position position="2469"/>
    </location>
    <ligand>
        <name>Zn(2+)</name>
        <dbReference type="ChEBI" id="CHEBI:29105"/>
        <label>5</label>
    </ligand>
</feature>
<feature type="binding site" evidence="20">
    <location>
        <position position="2473"/>
    </location>
    <ligand>
        <name>Zn(2+)</name>
        <dbReference type="ChEBI" id="CHEBI:29105"/>
        <label>5</label>
    </ligand>
</feature>
<feature type="binding site" evidence="20">
    <location>
        <position position="2476"/>
    </location>
    <ligand>
        <name>Zn(2+)</name>
        <dbReference type="ChEBI" id="CHEBI:29105"/>
        <label>5</label>
    </ligand>
</feature>
<feature type="binding site" evidence="14">
    <location>
        <position position="4339"/>
    </location>
    <ligand>
        <name>Zn(2+)</name>
        <dbReference type="ChEBI" id="CHEBI:29105"/>
        <label>6</label>
    </ligand>
</feature>
<feature type="binding site" evidence="14">
    <location>
        <position position="4342"/>
    </location>
    <ligand>
        <name>Zn(2+)</name>
        <dbReference type="ChEBI" id="CHEBI:29105"/>
        <label>6</label>
    </ligand>
</feature>
<feature type="binding site" evidence="14">
    <location>
        <position position="4348"/>
    </location>
    <ligand>
        <name>Zn(2+)</name>
        <dbReference type="ChEBI" id="CHEBI:29105"/>
        <label>6</label>
    </ligand>
</feature>
<feature type="binding site" evidence="14">
    <location>
        <position position="4355"/>
    </location>
    <ligand>
        <name>Zn(2+)</name>
        <dbReference type="ChEBI" id="CHEBI:29105"/>
        <label>6</label>
    </ligand>
</feature>
<feature type="binding site" evidence="14">
    <location>
        <position position="4381"/>
    </location>
    <ligand>
        <name>Zn(2+)</name>
        <dbReference type="ChEBI" id="CHEBI:29105"/>
        <label>7</label>
    </ligand>
</feature>
<feature type="binding site" evidence="14">
    <location>
        <position position="4384"/>
    </location>
    <ligand>
        <name>Zn(2+)</name>
        <dbReference type="ChEBI" id="CHEBI:29105"/>
        <label>7</label>
    </ligand>
</feature>
<feature type="binding site" evidence="14">
    <location>
        <position position="4392"/>
    </location>
    <ligand>
        <name>Zn(2+)</name>
        <dbReference type="ChEBI" id="CHEBI:29105"/>
        <label>7</label>
    </ligand>
</feature>
<feature type="binding site" evidence="14">
    <location>
        <position position="4394"/>
    </location>
    <ligand>
        <name>Zn(2+)</name>
        <dbReference type="ChEBI" id="CHEBI:29105"/>
        <label>7</label>
    </ligand>
</feature>
<feature type="site" description="Cleavage; by PL1-PRO" evidence="1">
    <location>
        <begin position="247"/>
        <end position="248"/>
    </location>
</feature>
<feature type="site" description="Cleavage; by PL1-PRO" evidence="1">
    <location>
        <begin position="832"/>
        <end position="833"/>
    </location>
</feature>
<feature type="site" description="Cleavage; by PL2-PRO" evidence="1">
    <location>
        <begin position="2783"/>
        <end position="2784"/>
    </location>
</feature>
<feature type="site" description="Cleavage; by 3CL-PRO" evidence="1">
    <location>
        <begin position="3279"/>
        <end position="3280"/>
    </location>
</feature>
<feature type="site" description="Cleavage; by 3CL-PRO" evidence="1">
    <location>
        <begin position="3582"/>
        <end position="3583"/>
    </location>
</feature>
<feature type="site" description="Cleavage; by 3CL-PRO" evidence="1">
    <location>
        <begin position="3869"/>
        <end position="3870"/>
    </location>
</feature>
<feature type="site" description="Cleavage; by 3CL-PRO" evidence="1">
    <location>
        <begin position="3961"/>
        <end position="3962"/>
    </location>
</feature>
<feature type="site" description="Cleavage; by 3CL-PRO" evidence="1">
    <location>
        <begin position="4155"/>
        <end position="4156"/>
    </location>
</feature>
<feature type="site" description="Cleavage; by 3CL-PRO" evidence="1">
    <location>
        <begin position="4265"/>
        <end position="4266"/>
    </location>
</feature>
<feature type="site" description="Cleavage; by 3CL-PRO" evidence="1">
    <location>
        <begin position="4402"/>
        <end position="4403"/>
    </location>
</feature>
<feature type="disulfide bond" evidence="21">
    <location>
        <begin position="2284"/>
        <end position="2308"/>
    </location>
</feature>
<feature type="disulfide bond" evidence="21">
    <location>
        <begin position="2299"/>
        <end position="2305"/>
    </location>
</feature>
<dbReference type="EC" id="3.4.19.12"/>
<dbReference type="EC" id="3.4.22.-"/>
<dbReference type="EC" id="3.4.22.69"/>
<dbReference type="EC" id="2.7.7.50"/>
<dbReference type="EMBL" id="AF201929">
    <property type="protein sequence ID" value="AAF19383.1"/>
    <property type="molecule type" value="Genomic_RNA"/>
</dbReference>
<dbReference type="SMR" id="P0C6U9"/>
<dbReference type="MEROPS" id="C16.001"/>
<dbReference type="Proteomes" id="UP000139707">
    <property type="component" value="Genome"/>
</dbReference>
<dbReference type="GO" id="GO:0033644">
    <property type="term" value="C:host cell membrane"/>
    <property type="evidence" value="ECO:0007669"/>
    <property type="project" value="UniProtKB-SubCell"/>
</dbReference>
<dbReference type="GO" id="GO:0044220">
    <property type="term" value="C:host cell perinuclear region of cytoplasm"/>
    <property type="evidence" value="ECO:0007669"/>
    <property type="project" value="UniProtKB-SubCell"/>
</dbReference>
<dbReference type="GO" id="GO:0016020">
    <property type="term" value="C:membrane"/>
    <property type="evidence" value="ECO:0007669"/>
    <property type="project" value="UniProtKB-KW"/>
</dbReference>
<dbReference type="GO" id="GO:0004843">
    <property type="term" value="F:cysteine-type deubiquitinase activity"/>
    <property type="evidence" value="ECO:0007669"/>
    <property type="project" value="UniProtKB-EC"/>
</dbReference>
<dbReference type="GO" id="GO:0004197">
    <property type="term" value="F:cysteine-type endopeptidase activity"/>
    <property type="evidence" value="ECO:0007669"/>
    <property type="project" value="InterPro"/>
</dbReference>
<dbReference type="GO" id="GO:0004519">
    <property type="term" value="F:endonuclease activity"/>
    <property type="evidence" value="ECO:0007669"/>
    <property type="project" value="UniProtKB-KW"/>
</dbReference>
<dbReference type="GO" id="GO:0008168">
    <property type="term" value="F:methyltransferase activity"/>
    <property type="evidence" value="ECO:0007669"/>
    <property type="project" value="UniProtKB-KW"/>
</dbReference>
<dbReference type="GO" id="GO:0008242">
    <property type="term" value="F:omega peptidase activity"/>
    <property type="evidence" value="ECO:0007669"/>
    <property type="project" value="InterPro"/>
</dbReference>
<dbReference type="GO" id="GO:0003968">
    <property type="term" value="F:RNA-directed RNA polymerase activity"/>
    <property type="evidence" value="ECO:0007669"/>
    <property type="project" value="InterPro"/>
</dbReference>
<dbReference type="GO" id="GO:0003727">
    <property type="term" value="F:single-stranded RNA binding"/>
    <property type="evidence" value="ECO:0007669"/>
    <property type="project" value="InterPro"/>
</dbReference>
<dbReference type="GO" id="GO:0008270">
    <property type="term" value="F:zinc ion binding"/>
    <property type="evidence" value="ECO:0007669"/>
    <property type="project" value="UniProtKB-KW"/>
</dbReference>
<dbReference type="GO" id="GO:0032259">
    <property type="term" value="P:methylation"/>
    <property type="evidence" value="ECO:0007669"/>
    <property type="project" value="UniProtKB-KW"/>
</dbReference>
<dbReference type="GO" id="GO:0006508">
    <property type="term" value="P:proteolysis"/>
    <property type="evidence" value="ECO:0007669"/>
    <property type="project" value="UniProtKB-KW"/>
</dbReference>
<dbReference type="GO" id="GO:0010506">
    <property type="term" value="P:regulation of autophagy"/>
    <property type="evidence" value="ECO:0007669"/>
    <property type="project" value="InterPro"/>
</dbReference>
<dbReference type="GO" id="GO:0039520">
    <property type="term" value="P:symbiont-mediated activation of host autophagy"/>
    <property type="evidence" value="ECO:0007669"/>
    <property type="project" value="UniProtKB-KW"/>
</dbReference>
<dbReference type="GO" id="GO:0039595">
    <property type="term" value="P:symbiont-mediated degradation of host mRNA"/>
    <property type="evidence" value="ECO:0007669"/>
    <property type="project" value="UniProtKB-KW"/>
</dbReference>
<dbReference type="GO" id="GO:0039648">
    <property type="term" value="P:symbiont-mediated perturbation of host ubiquitin-like protein modification"/>
    <property type="evidence" value="ECO:0007669"/>
    <property type="project" value="UniProtKB-KW"/>
</dbReference>
<dbReference type="GO" id="GO:0039548">
    <property type="term" value="P:symbiont-mediated suppression of host cytoplasmic pattern recognition receptor signaling pathway via inhibition of IRF3 activity"/>
    <property type="evidence" value="ECO:0007669"/>
    <property type="project" value="UniProtKB-KW"/>
</dbReference>
<dbReference type="GO" id="GO:0039657">
    <property type="term" value="P:symbiont-mediated suppression of host gene expression"/>
    <property type="evidence" value="ECO:0007669"/>
    <property type="project" value="UniProtKB-KW"/>
</dbReference>
<dbReference type="GO" id="GO:0039579">
    <property type="term" value="P:symbiont-mediated suppression of host ISG15-protein conjugation"/>
    <property type="evidence" value="ECO:0007669"/>
    <property type="project" value="UniProtKB-KW"/>
</dbReference>
<dbReference type="GO" id="GO:0039502">
    <property type="term" value="P:symbiont-mediated suppression of host type I interferon-mediated signaling pathway"/>
    <property type="evidence" value="ECO:0007669"/>
    <property type="project" value="UniProtKB-KW"/>
</dbReference>
<dbReference type="GO" id="GO:0019079">
    <property type="term" value="P:viral genome replication"/>
    <property type="evidence" value="ECO:0007669"/>
    <property type="project" value="InterPro"/>
</dbReference>
<dbReference type="GO" id="GO:0019082">
    <property type="term" value="P:viral protein processing"/>
    <property type="evidence" value="ECO:0007669"/>
    <property type="project" value="InterPro"/>
</dbReference>
<dbReference type="GO" id="GO:0075523">
    <property type="term" value="P:viral translational frameshifting"/>
    <property type="evidence" value="ECO:0007669"/>
    <property type="project" value="UniProtKB-KW"/>
</dbReference>
<dbReference type="CDD" id="cd21901">
    <property type="entry name" value="alpha_betaCoV_Nsp10"/>
    <property type="match status" value="1"/>
</dbReference>
<dbReference type="CDD" id="cd21560">
    <property type="entry name" value="betaCoV-Nsp6"/>
    <property type="match status" value="1"/>
</dbReference>
<dbReference type="CDD" id="cd21519">
    <property type="entry name" value="betaCoV_Nsp2_MHV-like"/>
    <property type="match status" value="1"/>
</dbReference>
<dbReference type="CDD" id="cd21666">
    <property type="entry name" value="betaCoV_Nsp5_Mpro"/>
    <property type="match status" value="1"/>
</dbReference>
<dbReference type="CDD" id="cd21827">
    <property type="entry name" value="betaCoV_Nsp7"/>
    <property type="match status" value="1"/>
</dbReference>
<dbReference type="CDD" id="cd21831">
    <property type="entry name" value="betaCoV_Nsp8"/>
    <property type="match status" value="1"/>
</dbReference>
<dbReference type="CDD" id="cd21898">
    <property type="entry name" value="betaCoV_Nsp9"/>
    <property type="match status" value="1"/>
</dbReference>
<dbReference type="CDD" id="cd21732">
    <property type="entry name" value="betaCoV_PLPro"/>
    <property type="match status" value="1"/>
</dbReference>
<dbReference type="CDD" id="cd21473">
    <property type="entry name" value="cv_Nsp4_TM"/>
    <property type="match status" value="1"/>
</dbReference>
<dbReference type="CDD" id="cd21524">
    <property type="entry name" value="DPUP_MHV_Nsp3"/>
    <property type="match status" value="1"/>
</dbReference>
<dbReference type="CDD" id="cd21879">
    <property type="entry name" value="MHV-like_Nsp1"/>
    <property type="match status" value="1"/>
</dbReference>
<dbReference type="CDD" id="cd21812">
    <property type="entry name" value="MHV-like_Nsp3_betaSM"/>
    <property type="match status" value="1"/>
</dbReference>
<dbReference type="CDD" id="cd21824">
    <property type="entry name" value="MHV-like_Nsp3_NAB"/>
    <property type="match status" value="1"/>
</dbReference>
<dbReference type="CDD" id="cd21714">
    <property type="entry name" value="TM_Y_MHV-like_Nsp3_C"/>
    <property type="match status" value="1"/>
</dbReference>
<dbReference type="CDD" id="cd21467">
    <property type="entry name" value="Ubl1_cv_Nsp3_N-like"/>
    <property type="match status" value="1"/>
</dbReference>
<dbReference type="FunFam" id="1.10.150.420:FF:000001">
    <property type="entry name" value="Replicase polyprotein"/>
    <property type="match status" value="1"/>
</dbReference>
<dbReference type="FunFam" id="2.40.10.10:FF:000045">
    <property type="entry name" value="Replicase polyprotein 1a"/>
    <property type="match status" value="1"/>
</dbReference>
<dbReference type="FunFam" id="2.40.10.250:FF:000002">
    <property type="entry name" value="Replicase polyprotein 1a"/>
    <property type="match status" value="1"/>
</dbReference>
<dbReference type="Gene3D" id="1.10.8.1190">
    <property type="match status" value="2"/>
</dbReference>
<dbReference type="Gene3D" id="2.60.120.1680">
    <property type="match status" value="1"/>
</dbReference>
<dbReference type="Gene3D" id="3.10.20.350">
    <property type="match status" value="1"/>
</dbReference>
<dbReference type="Gene3D" id="3.10.20.540">
    <property type="match status" value="1"/>
</dbReference>
<dbReference type="Gene3D" id="6.10.140.2090">
    <property type="match status" value="1"/>
</dbReference>
<dbReference type="Gene3D" id="1.10.150.420">
    <property type="entry name" value="Coronavirus nonstructural protein 4 C-terminus"/>
    <property type="match status" value="1"/>
</dbReference>
<dbReference type="Gene3D" id="3.40.220.10">
    <property type="entry name" value="Leucine Aminopeptidase, subunit E, domain 1"/>
    <property type="match status" value="1"/>
</dbReference>
<dbReference type="Gene3D" id="1.10.1840.10">
    <property type="entry name" value="main proteinase (3clpro) structure, domain 3"/>
    <property type="match status" value="1"/>
</dbReference>
<dbReference type="Gene3D" id="1.10.8.370">
    <property type="entry name" value="nsp7 replicase"/>
    <property type="match status" value="1"/>
</dbReference>
<dbReference type="Gene3D" id="3.30.70.3540">
    <property type="entry name" value="Nsp8 replicase, head domain"/>
    <property type="match status" value="1"/>
</dbReference>
<dbReference type="Gene3D" id="2.40.10.250">
    <property type="entry name" value="Replicase NSP9"/>
    <property type="match status" value="1"/>
</dbReference>
<dbReference type="Gene3D" id="3.40.50.11020">
    <property type="entry name" value="Replicase polyprotein, nucleic acid-binding domain"/>
    <property type="match status" value="1"/>
</dbReference>
<dbReference type="Gene3D" id="2.40.10.10">
    <property type="entry name" value="Trypsin-like serine proteases"/>
    <property type="match status" value="2"/>
</dbReference>
<dbReference type="InterPro" id="IPR046443">
    <property type="entry name" value="a/bCoV_NSP1_glob"/>
</dbReference>
<dbReference type="InterPro" id="IPR022570">
    <property type="entry name" value="B-CoV_A_NSP1"/>
</dbReference>
<dbReference type="InterPro" id="IPR046442">
    <property type="entry name" value="bCoV_NSP1_C"/>
</dbReference>
<dbReference type="InterPro" id="IPR043613">
    <property type="entry name" value="CoV_NSP2_C"/>
</dbReference>
<dbReference type="InterPro" id="IPR047573">
    <property type="entry name" value="CoV_NSP2_M"/>
</dbReference>
<dbReference type="InterPro" id="IPR049894">
    <property type="entry name" value="COV_NSP3_3ECTO"/>
</dbReference>
<dbReference type="InterPro" id="IPR043611">
    <property type="entry name" value="CoV_NSP3_C"/>
</dbReference>
<dbReference type="InterPro" id="IPR047566">
    <property type="entry name" value="CoV_NSP3_Y"/>
</dbReference>
<dbReference type="InterPro" id="IPR032505">
    <property type="entry name" value="CoV_NSP4_C"/>
</dbReference>
<dbReference type="InterPro" id="IPR043612">
    <property type="entry name" value="CoV_NSP4_N"/>
</dbReference>
<dbReference type="InterPro" id="IPR022733">
    <property type="entry name" value="DPUP_SUD_C_bCoV"/>
</dbReference>
<dbReference type="InterPro" id="IPR002589">
    <property type="entry name" value="Macro_dom"/>
</dbReference>
<dbReference type="InterPro" id="IPR043472">
    <property type="entry name" value="Macro_dom-like"/>
</dbReference>
<dbReference type="InterPro" id="IPR036333">
    <property type="entry name" value="NSP10_sf_CoV"/>
</dbReference>
<dbReference type="InterPro" id="IPR044384">
    <property type="entry name" value="NSP2_MHV-like"/>
</dbReference>
<dbReference type="InterPro" id="IPR043615">
    <property type="entry name" value="NSP2_N_CoV"/>
</dbReference>
<dbReference type="InterPro" id="IPR044381">
    <property type="entry name" value="NSP3_DPUP_MHV"/>
</dbReference>
<dbReference type="InterPro" id="IPR047567">
    <property type="entry name" value="NSP3_G2M_bCoV"/>
</dbReference>
<dbReference type="InterPro" id="IPR032592">
    <property type="entry name" value="NSP3_NAB_bCoV"/>
</dbReference>
<dbReference type="InterPro" id="IPR042570">
    <property type="entry name" value="NSP3_NAB_bCoV_sf"/>
</dbReference>
<dbReference type="InterPro" id="IPR044357">
    <property type="entry name" value="NSP3_Ubl1_dom_CoV"/>
</dbReference>
<dbReference type="InterPro" id="IPR044353">
    <property type="entry name" value="Nsp3_Ubl2_dom_CoV"/>
</dbReference>
<dbReference type="InterPro" id="IPR038083">
    <property type="entry name" value="NSP3A-like"/>
</dbReference>
<dbReference type="InterPro" id="IPR038123">
    <property type="entry name" value="NSP4_C_sf_CoV"/>
</dbReference>
<dbReference type="InterPro" id="IPR044367">
    <property type="entry name" value="NSP6_betaCoV"/>
</dbReference>
<dbReference type="InterPro" id="IPR043610">
    <property type="entry name" value="NSP6_CoV"/>
</dbReference>
<dbReference type="InterPro" id="IPR014828">
    <property type="entry name" value="NSP7_CoV"/>
</dbReference>
<dbReference type="InterPro" id="IPR037204">
    <property type="entry name" value="NSP7_sf_CoV"/>
</dbReference>
<dbReference type="InterPro" id="IPR014829">
    <property type="entry name" value="NSP8_CoV"/>
</dbReference>
<dbReference type="InterPro" id="IPR037230">
    <property type="entry name" value="NSP8_sf_CoV"/>
</dbReference>
<dbReference type="InterPro" id="IPR014822">
    <property type="entry name" value="NSP9_CoV"/>
</dbReference>
<dbReference type="InterPro" id="IPR036499">
    <property type="entry name" value="NSP9_sf_CoV"/>
</dbReference>
<dbReference type="InterPro" id="IPR002705">
    <property type="entry name" value="Pept_C30/C16_B_coronavir"/>
</dbReference>
<dbReference type="InterPro" id="IPR013016">
    <property type="entry name" value="Peptidase_C16_CoV"/>
</dbReference>
<dbReference type="InterPro" id="IPR008740">
    <property type="entry name" value="Peptidase_C30_CoV"/>
</dbReference>
<dbReference type="InterPro" id="IPR043477">
    <property type="entry name" value="Peptidase_C30_dom3_CoV"/>
</dbReference>
<dbReference type="InterPro" id="IPR009003">
    <property type="entry name" value="Peptidase_S1_PA"/>
</dbReference>
<dbReference type="InterPro" id="IPR043504">
    <property type="entry name" value="Peptidase_S1_PA_chymotrypsin"/>
</dbReference>
<dbReference type="InterPro" id="IPR043177">
    <property type="entry name" value="PLpro_N_sf_CoV"/>
</dbReference>
<dbReference type="InterPro" id="IPR043503">
    <property type="entry name" value="PLpro_palm_finger_dom_CoV"/>
</dbReference>
<dbReference type="InterPro" id="IPR043178">
    <property type="entry name" value="PLpro_thumb_sf_CoV"/>
</dbReference>
<dbReference type="InterPro" id="IPR018995">
    <property type="entry name" value="RNA_synth_NSP10_CoV"/>
</dbReference>
<dbReference type="InterPro" id="IPR029063">
    <property type="entry name" value="SAM-dependent_MTases_sf"/>
</dbReference>
<dbReference type="Pfam" id="PF11963">
    <property type="entry name" value="B-CoV_A_NSP1"/>
    <property type="match status" value="1"/>
</dbReference>
<dbReference type="Pfam" id="PF16251">
    <property type="entry name" value="bCoV_NAB"/>
    <property type="match status" value="1"/>
</dbReference>
<dbReference type="Pfam" id="PF09401">
    <property type="entry name" value="CoV_NSP10"/>
    <property type="match status" value="1"/>
</dbReference>
<dbReference type="Pfam" id="PF19218">
    <property type="entry name" value="CoV_NSP3_C"/>
    <property type="match status" value="1"/>
</dbReference>
<dbReference type="Pfam" id="PF16348">
    <property type="entry name" value="CoV_NSP4_C"/>
    <property type="match status" value="1"/>
</dbReference>
<dbReference type="Pfam" id="PF19217">
    <property type="entry name" value="CoV_NSP4_N"/>
    <property type="match status" value="1"/>
</dbReference>
<dbReference type="Pfam" id="PF19213">
    <property type="entry name" value="CoV_NSP6"/>
    <property type="match status" value="1"/>
</dbReference>
<dbReference type="Pfam" id="PF08716">
    <property type="entry name" value="CoV_NSP7"/>
    <property type="match status" value="1"/>
</dbReference>
<dbReference type="Pfam" id="PF08717">
    <property type="entry name" value="CoV_NSP8"/>
    <property type="match status" value="1"/>
</dbReference>
<dbReference type="Pfam" id="PF08710">
    <property type="entry name" value="CoV_NSP9"/>
    <property type="match status" value="1"/>
</dbReference>
<dbReference type="Pfam" id="PF08715">
    <property type="entry name" value="CoV_peptidase"/>
    <property type="match status" value="1"/>
</dbReference>
<dbReference type="Pfam" id="PF01661">
    <property type="entry name" value="Macro"/>
    <property type="match status" value="1"/>
</dbReference>
<dbReference type="Pfam" id="PF22104">
    <property type="entry name" value="MHV_Nsp3_DPUP"/>
    <property type="match status" value="1"/>
</dbReference>
<dbReference type="Pfam" id="PF01831">
    <property type="entry name" value="Peptidase_C16"/>
    <property type="match status" value="1"/>
</dbReference>
<dbReference type="Pfam" id="PF05409">
    <property type="entry name" value="Peptidase_C30"/>
    <property type="match status" value="1"/>
</dbReference>
<dbReference type="SMART" id="SM00506">
    <property type="entry name" value="A1pp"/>
    <property type="match status" value="1"/>
</dbReference>
<dbReference type="SUPFAM" id="SSF144246">
    <property type="entry name" value="Coronavirus NSP10-like"/>
    <property type="match status" value="1"/>
</dbReference>
<dbReference type="SUPFAM" id="SSF140367">
    <property type="entry name" value="Coronavirus NSP7-like"/>
    <property type="match status" value="1"/>
</dbReference>
<dbReference type="SUPFAM" id="SSF143076">
    <property type="entry name" value="Coronavirus NSP8-like"/>
    <property type="match status" value="1"/>
</dbReference>
<dbReference type="SUPFAM" id="SSF52949">
    <property type="entry name" value="Macro domain-like"/>
    <property type="match status" value="1"/>
</dbReference>
<dbReference type="SUPFAM" id="SSF159936">
    <property type="entry name" value="NSP3A-like"/>
    <property type="match status" value="1"/>
</dbReference>
<dbReference type="SUPFAM" id="SSF101816">
    <property type="entry name" value="Replicase NSP9"/>
    <property type="match status" value="1"/>
</dbReference>
<dbReference type="SUPFAM" id="SSF53335">
    <property type="entry name" value="S-adenosyl-L-methionine-dependent methyltransferases"/>
    <property type="match status" value="1"/>
</dbReference>
<dbReference type="SUPFAM" id="SSF50494">
    <property type="entry name" value="Trypsin-like serine proteases"/>
    <property type="match status" value="1"/>
</dbReference>
<dbReference type="PROSITE" id="PS51963">
    <property type="entry name" value="BCOV_NSP1_C"/>
    <property type="match status" value="1"/>
</dbReference>
<dbReference type="PROSITE" id="PS51942">
    <property type="entry name" value="BCOV_NSP3C_C"/>
    <property type="match status" value="1"/>
</dbReference>
<dbReference type="PROSITE" id="PS51994">
    <property type="entry name" value="BCOV_NSP3E_G2M"/>
    <property type="match status" value="1"/>
</dbReference>
<dbReference type="PROSITE" id="PS51945">
    <property type="entry name" value="BCOV_NSP3E_NAB"/>
    <property type="match status" value="1"/>
</dbReference>
<dbReference type="PROSITE" id="PS51993">
    <property type="entry name" value="COV_3ECTO"/>
    <property type="match status" value="1"/>
</dbReference>
<dbReference type="PROSITE" id="PS51952">
    <property type="entry name" value="COV_EXON_MTASE_COACT"/>
    <property type="match status" value="1"/>
</dbReference>
<dbReference type="PROSITE" id="PS51962">
    <property type="entry name" value="COV_NSP1"/>
    <property type="match status" value="1"/>
</dbReference>
<dbReference type="PROSITE" id="PS51991">
    <property type="entry name" value="COV_NSP2_C"/>
    <property type="match status" value="1"/>
</dbReference>
<dbReference type="PROSITE" id="PS51990">
    <property type="entry name" value="COV_NSP2_M"/>
    <property type="match status" value="1"/>
</dbReference>
<dbReference type="PROSITE" id="PS51989">
    <property type="entry name" value="COV_NSP2_N"/>
    <property type="match status" value="1"/>
</dbReference>
<dbReference type="PROSITE" id="PS51992">
    <property type="entry name" value="COV_NSP3_Y"/>
    <property type="match status" value="1"/>
</dbReference>
<dbReference type="PROSITE" id="PS51943">
    <property type="entry name" value="COV_NSP3A_UBL"/>
    <property type="match status" value="1"/>
</dbReference>
<dbReference type="PROSITE" id="PS51944">
    <property type="entry name" value="COV_NSP3D_UBL"/>
    <property type="match status" value="1"/>
</dbReference>
<dbReference type="PROSITE" id="PS51946">
    <property type="entry name" value="COV_NSP4C"/>
    <property type="match status" value="1"/>
</dbReference>
<dbReference type="PROSITE" id="PS51949">
    <property type="entry name" value="COV_NSP7"/>
    <property type="match status" value="1"/>
</dbReference>
<dbReference type="PROSITE" id="PS51950">
    <property type="entry name" value="COV_NSP8"/>
    <property type="match status" value="1"/>
</dbReference>
<dbReference type="PROSITE" id="PS51951">
    <property type="entry name" value="COV_NSP9_SSRNA_BD"/>
    <property type="match status" value="1"/>
</dbReference>
<dbReference type="PROSITE" id="PS51442">
    <property type="entry name" value="M_PRO"/>
    <property type="match status" value="1"/>
</dbReference>
<dbReference type="PROSITE" id="PS51154">
    <property type="entry name" value="MACRO"/>
    <property type="match status" value="1"/>
</dbReference>
<dbReference type="PROSITE" id="PS51124">
    <property type="entry name" value="PEPTIDASE_C16"/>
    <property type="match status" value="2"/>
</dbReference>
<reference key="1">
    <citation type="submission" date="1999-11" db="EMBL/GenBank/DDBJ databases">
        <title>Pathogenesis and sequence analysis of mouse hepatitis virus type 2: an experimental model system of acute meningitis and hepatitis in mice.</title>
        <authorList>
            <person name="Das Sarma J."/>
            <person name="Hingley S.T."/>
            <person name="Lai M.M.C."/>
            <person name="Weiss S.R."/>
            <person name="Lavi E."/>
        </authorList>
    </citation>
    <scope>NUCLEOTIDE SEQUENCE [GENOMIC RNA]</scope>
</reference>
<organismHost>
    <name type="scientific">Mus musculus</name>
    <name type="common">Mouse</name>
    <dbReference type="NCBI Taxonomy" id="10090"/>
</organismHost>
<keyword id="KW-1072">Activation of host autophagy by virus</keyword>
<keyword id="KW-1132">Decay of host mRNAs by virus</keyword>
<keyword id="KW-1015">Disulfide bond</keyword>
<keyword id="KW-0255">Endonuclease</keyword>
<keyword id="KW-1262">Eukaryotic host gene expression shutoff by virus</keyword>
<keyword id="KW-1193">Eukaryotic host translation shutoff by virus</keyword>
<keyword id="KW-1035">Host cytoplasm</keyword>
<keyword id="KW-1190">Host gene expression shutoff by virus</keyword>
<keyword id="KW-1043">Host membrane</keyword>
<keyword id="KW-1192">Host mRNA suppression by virus</keyword>
<keyword id="KW-0945">Host-virus interaction</keyword>
<keyword id="KW-0378">Hydrolase</keyword>
<keyword id="KW-1090">Inhibition of host innate immune response by virus</keyword>
<keyword id="KW-1114">Inhibition of host interferon signaling pathway by virus</keyword>
<keyword id="KW-1092">Inhibition of host IRF3 by virus</keyword>
<keyword id="KW-1095">Inhibition of host ISG15 by virus</keyword>
<keyword id="KW-1113">Inhibition of host RLR pathway by virus</keyword>
<keyword id="KW-0922">Interferon antiviral system evasion</keyword>
<keyword id="KW-0472">Membrane</keyword>
<keyword id="KW-0479">Metal-binding</keyword>
<keyword id="KW-0489">Methyltransferase</keyword>
<keyword id="KW-1127">Modulation of host ubiquitin pathway by viral deubiquitinase</keyword>
<keyword id="KW-1130">Modulation of host ubiquitin pathway by virus</keyword>
<keyword id="KW-0540">Nuclease</keyword>
<keyword id="KW-0645">Protease</keyword>
<keyword id="KW-1185">Reference proteome</keyword>
<keyword id="KW-0677">Repeat</keyword>
<keyword id="KW-0688">Ribosomal frameshifting</keyword>
<keyword id="KW-0694">RNA-binding</keyword>
<keyword id="KW-0788">Thiol protease</keyword>
<keyword id="KW-0808">Transferase</keyword>
<keyword id="KW-0812">Transmembrane</keyword>
<keyword id="KW-1133">Transmembrane helix</keyword>
<keyword id="KW-0833">Ubl conjugation pathway</keyword>
<keyword id="KW-0899">Viral immunoevasion</keyword>
<keyword id="KW-0862">Zinc</keyword>
<keyword id="KW-0863">Zinc-finger</keyword>
<comment type="function">
    <text evidence="1">The papain-like proteinase 1 (PL1-PRO) and papain-like proteinase 2 (PL2-PRO) are responsible for the cleavages located at the N-terminus of the replicase polyprotein. In addition, PLP2 possesses a deubiquitinating/deISGylating activity and processes both 'Lys-48'- and 'Lys-63'-linked polyubiquitin chains from cellular substrates. Antagonizes innate immune induction of type I interferon by blocking the phosphorylation, dimerization and subsequent nuclear translocation of host IRF-3 (By similarity).</text>
</comment>
<comment type="function">
    <molecule>3C-like proteinase nsp5</molecule>
    <text evidence="7">Responsible for the majority of cleavages as it cleaves the C-terminus of replicase polyprotein at 11 sites. Recognizes substrates containing the core sequence [ILMVF]-Q-|-[SGACN]. Inhibited by the substrate-analog Cbz-Val-Asn-Ser-Thr-Leu-Gln-CMK. Also contains an ADP-ribose-1''-phosphate (ADRP)-binding function (By similarity).</text>
</comment>
<comment type="function">
    <text evidence="1">Nsp7-nsp8 hexadecamer may possibly confer processivity to the polymerase, maybe by binding to dsRNA or by producing primers utilized by the latter.</text>
</comment>
<comment type="function">
    <molecule>RNA-capping enzyme subunit nsp9</molecule>
    <text evidence="2">Catalytic subunit of viral RNA capping enzyme which catalyzes the RNA guanylyltransferase reaction for genomic and sub-genomic RNAs. The kinase-like NiRAN domain of NSP12 transfers RNA to the amino terminus of NSP9, forming a covalent RNA-protein intermediate. Subsequently, the NiRAN domain transfers RNA to GDP, forming the core cap structure GpppA-RNA. The NSP14 and NSP16 methyltransferases then add methyl groups to form functional cap structures.</text>
</comment>
<comment type="function">
    <molecule>Non-structural protein 1</molecule>
    <text evidence="1">Binds to the 40S ribosomal subunit and inhibits host translation. The nsp1-40S ribosome complex further induces an endonucleolytic cleavage near the 5'UTR of host mRNAs, targeting them for degradation. By suppressing host gene expression, nsp1 facilitates efficient viral gene expression in infected cells and evasion from host immune response (By similarity).</text>
</comment>
<comment type="catalytic activity">
    <molecule>Papain-like protease nsp3</molecule>
    <reaction evidence="2">
        <text>Thiol-dependent hydrolysis of ester, thioester, amide, peptide and isopeptide bonds formed by the C-terminal Gly of ubiquitin (a 76-residue protein attached to proteins as an intracellular targeting signal).</text>
        <dbReference type="EC" id="3.4.19.12"/>
    </reaction>
</comment>
<comment type="catalytic activity">
    <molecule>3C-like proteinase nsp5</molecule>
    <reaction evidence="2">
        <text>TSAVLQ-|-SGFRK-NH2 and SGVTFQ-|-GKFKK the two peptides corresponding to the two self-cleavage sites of the SARS 3C-like proteinase are the two most reactive peptide substrates. The enzyme exhibits a strong preference for substrates containing Gln at P1 position and Leu at P2 position.</text>
        <dbReference type="EC" id="3.4.22.69"/>
    </reaction>
</comment>
<comment type="catalytic activity">
    <molecule>RNA-capping enzyme subunit nsp9</molecule>
    <reaction evidence="2">
        <text>a 5'-end diphospho-ribonucleoside in mRNA + GTP + H(+) = a 5'-end (5'-triphosphoguanosine)-ribonucleoside in mRNA + diphosphate</text>
        <dbReference type="Rhea" id="RHEA:67012"/>
        <dbReference type="Rhea" id="RHEA-COMP:17165"/>
        <dbReference type="Rhea" id="RHEA-COMP:17166"/>
        <dbReference type="ChEBI" id="CHEBI:15378"/>
        <dbReference type="ChEBI" id="CHEBI:33019"/>
        <dbReference type="ChEBI" id="CHEBI:37565"/>
        <dbReference type="ChEBI" id="CHEBI:167616"/>
        <dbReference type="ChEBI" id="CHEBI:167617"/>
        <dbReference type="EC" id="2.7.7.50"/>
    </reaction>
    <physiologicalReaction direction="right-to-left" evidence="2">
        <dbReference type="Rhea" id="RHEA:67014"/>
    </physiologicalReaction>
</comment>
<comment type="subunit">
    <text evidence="1">3CL-PRO exists as monomer and homodimer. Eight copies of nsp7 and eight copies of nsp8 assemble to form a heterohexadecamer. Nsp9 is a dimer. Nsp10 forms a dodecamer (By similarity).</text>
</comment>
<comment type="subcellular location">
    <molecule>Papain-like protease nsp3</molecule>
    <subcellularLocation>
        <location evidence="24">Host membrane</location>
        <topology evidence="24">Multi-pass membrane protein</topology>
    </subcellularLocation>
</comment>
<comment type="subcellular location">
    <molecule>Non-structural protein 4</molecule>
    <subcellularLocation>
        <location evidence="24">Host membrane</location>
        <topology evidence="24">Multi-pass membrane protein</topology>
    </subcellularLocation>
</comment>
<comment type="subcellular location">
    <molecule>Non-structural protein 6</molecule>
    <subcellularLocation>
        <location evidence="24">Host membrane</location>
        <topology evidence="24">Multi-pass membrane protein</topology>
    </subcellularLocation>
</comment>
<comment type="subcellular location">
    <molecule>Non-structural protein 7</molecule>
    <subcellularLocation>
        <location evidence="1">Host cytoplasm</location>
        <location evidence="1">Host perinuclear region</location>
    </subcellularLocation>
    <text evidence="1">nsp7, nsp8, nsp9 and nsp10 are localized in cytoplasmic foci, largely perinuclear. Late in infection, they merge into confluent complexes (By similarity).</text>
</comment>
<comment type="subcellular location">
    <molecule>Non-structural protein 8</molecule>
    <subcellularLocation>
        <location evidence="1">Host cytoplasm</location>
        <location evidence="1">Host perinuclear region</location>
    </subcellularLocation>
    <text evidence="1">nsp7, nsp8, nsp9 and nsp10 are localized in cytoplasmic foci, largely perinuclear. Late in infection, they merge into confluent complexes (By similarity).</text>
</comment>
<comment type="subcellular location">
    <molecule>RNA-capping enzyme subunit nsp9</molecule>
    <subcellularLocation>
        <location evidence="1">Host cytoplasm</location>
        <location evidence="1">Host perinuclear region</location>
    </subcellularLocation>
    <text evidence="1">nsp7, nsp8, nsp9 and nsp10 are localized in cytoplasmic foci, largely perinuclear. Late in infection, they merge into confluent complexes (By similarity).</text>
</comment>
<comment type="subcellular location">
    <molecule>Non-structural protein 10</molecule>
    <subcellularLocation>
        <location evidence="1">Host cytoplasm</location>
        <location evidence="1">Host perinuclear region</location>
    </subcellularLocation>
    <text evidence="1">nsp7, nsp8, nsp9 and nsp10 are localized in cytoplasmic foci, largely perinuclear. Late in infection, they merge into confluent complexes (By similarity).</text>
</comment>
<comment type="alternative products">
    <event type="ribosomal frameshifting"/>
    <isoform>
        <id>P0C6U9-1</id>
        <name>Replicase polyprotein 1a</name>
        <name>pp1a</name>
        <name>ORF1a polyprotein</name>
        <sequence type="displayed"/>
    </isoform>
    <isoform>
        <id>P0C6X8-1</id>
        <name>Replicase polyprotein 1ab</name>
        <name>pp1ab</name>
        <sequence type="external"/>
    </isoform>
</comment>
<comment type="domain">
    <text>The hydrophobic domains (HD) could mediate the membrane association of the replication complex and thereby alter the architecture of the host cell membrane.</text>
</comment>
<comment type="PTM">
    <text evidence="1">Specific enzymatic cleavages in vivo by its own proteases yield mature proteins. 3CL-PRO and PL-PRO proteinases are autocatalytically processed (By similarity).</text>
</comment>
<comment type="miscellaneous">
    <molecule>Isoform Replicase polyprotein 1a</molecule>
    <text>Produced by conventional translation.</text>
</comment>
<comment type="similarity">
    <text evidence="24">Belongs to the coronaviruses polyprotein 1ab family.</text>
</comment>
<accession>P0C6U9</accession>
<accession>Q9PYA3</accession>
<protein>
    <recommendedName>
        <fullName>Replicase polyprotein 1a</fullName>
        <shortName>pp1a</shortName>
    </recommendedName>
    <alternativeName>
        <fullName>ORF1a polyprotein</fullName>
    </alternativeName>
    <component>
        <recommendedName>
            <fullName>Non-structural protein 1</fullName>
            <shortName>nsp1</shortName>
        </recommendedName>
        <alternativeName>
            <fullName>p28</fullName>
        </alternativeName>
    </component>
    <component>
        <recommendedName>
            <fullName>Non-structural protein 2</fullName>
            <shortName>nsp2</shortName>
        </recommendedName>
        <alternativeName>
            <fullName>p65</fullName>
        </alternativeName>
    </component>
    <component>
        <recommendedName>
            <fullName>Papain-like protease nsp3</fullName>
            <shortName>PL-PRO</shortName>
            <ecNumber>3.4.19.12</ecNumber>
            <ecNumber>3.4.22.-</ecNumber>
        </recommendedName>
        <alternativeName>
            <fullName>Non-structural protein 3</fullName>
            <shortName>nsp3</shortName>
        </alternativeName>
        <alternativeName>
            <fullName>PL1-PRO/PL2-PRO</fullName>
        </alternativeName>
        <alternativeName>
            <fullName>PL1/PL2</fullName>
        </alternativeName>
        <alternativeName>
            <fullName>PL2-PRO</fullName>
        </alternativeName>
        <alternativeName>
            <fullName>Papain-like proteinases 1/2</fullName>
        </alternativeName>
        <alternativeName>
            <fullName>p210</fullName>
        </alternativeName>
    </component>
    <component>
        <recommendedName>
            <fullName>Non-structural protein 4</fullName>
            <shortName>nsp4</shortName>
        </recommendedName>
        <alternativeName>
            <fullName>Peptide HD2</fullName>
        </alternativeName>
        <alternativeName>
            <fullName>p44</fullName>
        </alternativeName>
    </component>
    <component>
        <recommendedName>
            <fullName>3C-like proteinase nsp5</fullName>
            <shortName>3CL-PRO</shortName>
            <shortName>3CLp</shortName>
            <ecNumber>3.4.22.69</ecNumber>
        </recommendedName>
        <alternativeName>
            <fullName>M-PRO</fullName>
        </alternativeName>
        <alternativeName>
            <fullName>nsp5</fullName>
        </alternativeName>
        <alternativeName>
            <fullName>p27</fullName>
        </alternativeName>
    </component>
    <component>
        <recommendedName>
            <fullName>Non-structural protein 6</fullName>
            <shortName>nsp6</shortName>
        </recommendedName>
    </component>
    <component>
        <recommendedName>
            <fullName>Non-structural protein 7</fullName>
            <shortName>nsp7</shortName>
        </recommendedName>
        <alternativeName>
            <fullName>p10</fullName>
        </alternativeName>
    </component>
    <component>
        <recommendedName>
            <fullName>Non-structural protein 8</fullName>
            <shortName>nsp8</shortName>
        </recommendedName>
        <alternativeName>
            <fullName>p22</fullName>
        </alternativeName>
    </component>
    <component>
        <recommendedName>
            <fullName>RNA-capping enzyme subunit nsp9</fullName>
        </recommendedName>
        <alternativeName>
            <fullName>Non-structural protein 9</fullName>
            <shortName>nsp9</shortName>
            <ecNumber>2.7.7.50</ecNumber>
        </alternativeName>
        <alternativeName>
            <fullName>p12</fullName>
        </alternativeName>
    </component>
    <component>
        <recommendedName>
            <fullName>Non-structural protein 10</fullName>
            <shortName>nsp10</shortName>
        </recommendedName>
        <alternativeName>
            <fullName>Growth factor-like peptide</fullName>
            <shortName>GFL</shortName>
        </alternativeName>
        <alternativeName>
            <fullName>p15</fullName>
        </alternativeName>
    </component>
    <component>
        <recommendedName>
            <fullName>Non-structural protein 11</fullName>
            <shortName>nsp11</shortName>
        </recommendedName>
    </component>
</protein>
<proteinExistence type="inferred from homology"/>